<comment type="function">
    <text evidence="1">The UvrABC repair system catalyzes the recognition and processing of DNA lesions. UvrC both incises the 5' and 3' sides of the lesion. The N-terminal half is responsible for the 3' incision and the C-terminal half is responsible for the 5' incision.</text>
</comment>
<comment type="subunit">
    <text evidence="1">Interacts with UvrB in an incision complex.</text>
</comment>
<comment type="subcellular location">
    <subcellularLocation>
        <location evidence="1">Cytoplasm</location>
    </subcellularLocation>
</comment>
<comment type="similarity">
    <text evidence="1">Belongs to the UvrC family.</text>
</comment>
<organism>
    <name type="scientific">Verminephrobacter eiseniae (strain EF01-2)</name>
    <dbReference type="NCBI Taxonomy" id="391735"/>
    <lineage>
        <taxon>Bacteria</taxon>
        <taxon>Pseudomonadati</taxon>
        <taxon>Pseudomonadota</taxon>
        <taxon>Betaproteobacteria</taxon>
        <taxon>Burkholderiales</taxon>
        <taxon>Comamonadaceae</taxon>
        <taxon>Verminephrobacter</taxon>
    </lineage>
</organism>
<sequence length="685" mass="74644">MHSEELLAQVAALPALPGVYRYFDSQGLLLYVGKARHLKRRVASYFTKNHGGTRIGHMVCKIARLETTVVRSEAEALLLENNLIKTQNPRFNILFRDDKSYPYLKITGAPASSAGRDAPGQRFPRIAYYRGAVDKQHRYFGPYPSAWAVKESIELLQKVFRLRTCEDTVFANRTRPCLLYQIKRCSGPCVNLIAPEAYAVDVQHAQALLSGQTQELLQAMEARMMAYSGQLAFEQAAEVRNQMQALSRVLHQQSIESAHDKDVDILAVRVQGGRACVNLAMVRGGRHLGDRPYFPTHLEDAALFEQETRDAEEAPATPPRPVEALVLEAFVAQHYMVVAPPPVLVTSTPLDKALLEALSGHLTAAQGGDHAPAAQGGDPPPAASSGGHPLRGTVHITAVHQPREQRRAWLEMAQKNADLQLARLLAQEGSQQARTRALAEALDLPLADLDPLTIECFDISHTAGEATQASCVVFHHHKMQSSEYRRYKIDGITGGDDYAAMRQVLTRRYGKLAEAAHEAGGVDCAARPAAPAQGQARLPDLVLIDGGKGQVGVAREVFTALGLDLTRIVGVEKGEGRKVGLEELVFADGREKASLGKDSAALMLVAQIRDEAHRFAITGMRAARARVRTGGGQLQEIAGVGPKKRARLLQRFGGVRGVASASVEDLITVDGISRALAEEIYRALR</sequence>
<feature type="chain" id="PRO_1000077857" description="UvrABC system protein C">
    <location>
        <begin position="1"/>
        <end position="685"/>
    </location>
</feature>
<feature type="domain" description="GIY-YIG" evidence="1">
    <location>
        <begin position="15"/>
        <end position="93"/>
    </location>
</feature>
<feature type="domain" description="UVR" evidence="1">
    <location>
        <begin position="214"/>
        <end position="249"/>
    </location>
</feature>
<feature type="region of interest" description="Disordered" evidence="2">
    <location>
        <begin position="365"/>
        <end position="391"/>
    </location>
</feature>
<feature type="compositionally biased region" description="Low complexity" evidence="2">
    <location>
        <begin position="365"/>
        <end position="388"/>
    </location>
</feature>
<reference key="1">
    <citation type="submission" date="2006-12" db="EMBL/GenBank/DDBJ databases">
        <title>Complete sequence of chromosome 1 of Verminephrobacter eiseniae EF01-2.</title>
        <authorList>
            <person name="Copeland A."/>
            <person name="Lucas S."/>
            <person name="Lapidus A."/>
            <person name="Barry K."/>
            <person name="Detter J.C."/>
            <person name="Glavina del Rio T."/>
            <person name="Dalin E."/>
            <person name="Tice H."/>
            <person name="Pitluck S."/>
            <person name="Chertkov O."/>
            <person name="Brettin T."/>
            <person name="Bruce D."/>
            <person name="Han C."/>
            <person name="Tapia R."/>
            <person name="Gilna P."/>
            <person name="Schmutz J."/>
            <person name="Larimer F."/>
            <person name="Land M."/>
            <person name="Hauser L."/>
            <person name="Kyrpides N."/>
            <person name="Kim E."/>
            <person name="Stahl D."/>
            <person name="Richardson P."/>
        </authorList>
    </citation>
    <scope>NUCLEOTIDE SEQUENCE [LARGE SCALE GENOMIC DNA]</scope>
    <source>
        <strain>EF01-2</strain>
    </source>
</reference>
<name>UVRC_VEREI</name>
<keyword id="KW-0963">Cytoplasm</keyword>
<keyword id="KW-0227">DNA damage</keyword>
<keyword id="KW-0228">DNA excision</keyword>
<keyword id="KW-0234">DNA repair</keyword>
<keyword id="KW-0267">Excision nuclease</keyword>
<keyword id="KW-1185">Reference proteome</keyword>
<keyword id="KW-0742">SOS response</keyword>
<gene>
    <name evidence="1" type="primary">uvrC</name>
    <name type="ordered locus">Veis_2700</name>
</gene>
<proteinExistence type="inferred from homology"/>
<protein>
    <recommendedName>
        <fullName evidence="1">UvrABC system protein C</fullName>
        <shortName evidence="1">Protein UvrC</shortName>
    </recommendedName>
    <alternativeName>
        <fullName evidence="1">Excinuclease ABC subunit C</fullName>
    </alternativeName>
</protein>
<dbReference type="EMBL" id="CP000542">
    <property type="protein sequence ID" value="ABM58442.1"/>
    <property type="molecule type" value="Genomic_DNA"/>
</dbReference>
<dbReference type="RefSeq" id="WP_011810440.1">
    <property type="nucleotide sequence ID" value="NC_008786.1"/>
</dbReference>
<dbReference type="SMR" id="A1WLD5"/>
<dbReference type="STRING" id="391735.Veis_2700"/>
<dbReference type="GeneID" id="76461208"/>
<dbReference type="KEGG" id="vei:Veis_2700"/>
<dbReference type="eggNOG" id="COG0322">
    <property type="taxonomic scope" value="Bacteria"/>
</dbReference>
<dbReference type="HOGENOM" id="CLU_014841_3_0_4"/>
<dbReference type="OrthoDB" id="9804933at2"/>
<dbReference type="Proteomes" id="UP000000374">
    <property type="component" value="Chromosome"/>
</dbReference>
<dbReference type="GO" id="GO:0005737">
    <property type="term" value="C:cytoplasm"/>
    <property type="evidence" value="ECO:0007669"/>
    <property type="project" value="UniProtKB-SubCell"/>
</dbReference>
<dbReference type="GO" id="GO:0009380">
    <property type="term" value="C:excinuclease repair complex"/>
    <property type="evidence" value="ECO:0007669"/>
    <property type="project" value="InterPro"/>
</dbReference>
<dbReference type="GO" id="GO:0003677">
    <property type="term" value="F:DNA binding"/>
    <property type="evidence" value="ECO:0007669"/>
    <property type="project" value="UniProtKB-UniRule"/>
</dbReference>
<dbReference type="GO" id="GO:0009381">
    <property type="term" value="F:excinuclease ABC activity"/>
    <property type="evidence" value="ECO:0007669"/>
    <property type="project" value="UniProtKB-UniRule"/>
</dbReference>
<dbReference type="GO" id="GO:0006289">
    <property type="term" value="P:nucleotide-excision repair"/>
    <property type="evidence" value="ECO:0007669"/>
    <property type="project" value="UniProtKB-UniRule"/>
</dbReference>
<dbReference type="GO" id="GO:0009432">
    <property type="term" value="P:SOS response"/>
    <property type="evidence" value="ECO:0007669"/>
    <property type="project" value="UniProtKB-UniRule"/>
</dbReference>
<dbReference type="CDD" id="cd10434">
    <property type="entry name" value="GIY-YIG_UvrC_Cho"/>
    <property type="match status" value="1"/>
</dbReference>
<dbReference type="FunFam" id="3.30.420.340:FF:000001">
    <property type="entry name" value="UvrABC system protein C"/>
    <property type="match status" value="1"/>
</dbReference>
<dbReference type="FunFam" id="3.40.1440.10:FF:000001">
    <property type="entry name" value="UvrABC system protein C"/>
    <property type="match status" value="1"/>
</dbReference>
<dbReference type="Gene3D" id="1.10.150.20">
    <property type="entry name" value="5' to 3' exonuclease, C-terminal subdomain"/>
    <property type="match status" value="1"/>
</dbReference>
<dbReference type="Gene3D" id="3.40.1440.10">
    <property type="entry name" value="GIY-YIG endonuclease"/>
    <property type="match status" value="1"/>
</dbReference>
<dbReference type="Gene3D" id="4.10.860.10">
    <property type="entry name" value="UVR domain"/>
    <property type="match status" value="1"/>
</dbReference>
<dbReference type="Gene3D" id="3.30.420.340">
    <property type="entry name" value="UvrC, RNAse H endonuclease domain"/>
    <property type="match status" value="1"/>
</dbReference>
<dbReference type="HAMAP" id="MF_00203">
    <property type="entry name" value="UvrC"/>
    <property type="match status" value="1"/>
</dbReference>
<dbReference type="InterPro" id="IPR000305">
    <property type="entry name" value="GIY-YIG_endonuc"/>
</dbReference>
<dbReference type="InterPro" id="IPR035901">
    <property type="entry name" value="GIY-YIG_endonuc_sf"/>
</dbReference>
<dbReference type="InterPro" id="IPR047296">
    <property type="entry name" value="GIY-YIG_UvrC_Cho"/>
</dbReference>
<dbReference type="InterPro" id="IPR003583">
    <property type="entry name" value="Hlx-hairpin-Hlx_DNA-bd_motif"/>
</dbReference>
<dbReference type="InterPro" id="IPR010994">
    <property type="entry name" value="RuvA_2-like"/>
</dbReference>
<dbReference type="InterPro" id="IPR001943">
    <property type="entry name" value="UVR_dom"/>
</dbReference>
<dbReference type="InterPro" id="IPR036876">
    <property type="entry name" value="UVR_dom_sf"/>
</dbReference>
<dbReference type="InterPro" id="IPR050066">
    <property type="entry name" value="UvrABC_protein_C"/>
</dbReference>
<dbReference type="InterPro" id="IPR004791">
    <property type="entry name" value="UvrC"/>
</dbReference>
<dbReference type="InterPro" id="IPR001162">
    <property type="entry name" value="UvrC_RNase_H_dom"/>
</dbReference>
<dbReference type="InterPro" id="IPR038476">
    <property type="entry name" value="UvrC_RNase_H_dom_sf"/>
</dbReference>
<dbReference type="PANTHER" id="PTHR30562:SF1">
    <property type="entry name" value="UVRABC SYSTEM PROTEIN C"/>
    <property type="match status" value="1"/>
</dbReference>
<dbReference type="PANTHER" id="PTHR30562">
    <property type="entry name" value="UVRC/OXIDOREDUCTASE"/>
    <property type="match status" value="1"/>
</dbReference>
<dbReference type="Pfam" id="PF01541">
    <property type="entry name" value="GIY-YIG"/>
    <property type="match status" value="1"/>
</dbReference>
<dbReference type="Pfam" id="PF14520">
    <property type="entry name" value="HHH_5"/>
    <property type="match status" value="1"/>
</dbReference>
<dbReference type="Pfam" id="PF22920">
    <property type="entry name" value="UvrC_RNaseH"/>
    <property type="match status" value="1"/>
</dbReference>
<dbReference type="Pfam" id="PF08459">
    <property type="entry name" value="UvrC_RNaseH_dom"/>
    <property type="match status" value="1"/>
</dbReference>
<dbReference type="SMART" id="SM00465">
    <property type="entry name" value="GIYc"/>
    <property type="match status" value="1"/>
</dbReference>
<dbReference type="SMART" id="SM00278">
    <property type="entry name" value="HhH1"/>
    <property type="match status" value="2"/>
</dbReference>
<dbReference type="SUPFAM" id="SSF46600">
    <property type="entry name" value="C-terminal UvrC-binding domain of UvrB"/>
    <property type="match status" value="1"/>
</dbReference>
<dbReference type="SUPFAM" id="SSF82771">
    <property type="entry name" value="GIY-YIG endonuclease"/>
    <property type="match status" value="1"/>
</dbReference>
<dbReference type="SUPFAM" id="SSF47781">
    <property type="entry name" value="RuvA domain 2-like"/>
    <property type="match status" value="1"/>
</dbReference>
<dbReference type="PROSITE" id="PS50164">
    <property type="entry name" value="GIY_YIG"/>
    <property type="match status" value="1"/>
</dbReference>
<dbReference type="PROSITE" id="PS50151">
    <property type="entry name" value="UVR"/>
    <property type="match status" value="1"/>
</dbReference>
<dbReference type="PROSITE" id="PS50165">
    <property type="entry name" value="UVRC"/>
    <property type="match status" value="1"/>
</dbReference>
<accession>A1WLD5</accession>
<evidence type="ECO:0000255" key="1">
    <source>
        <dbReference type="HAMAP-Rule" id="MF_00203"/>
    </source>
</evidence>
<evidence type="ECO:0000256" key="2">
    <source>
        <dbReference type="SAM" id="MobiDB-lite"/>
    </source>
</evidence>